<feature type="chain" id="PRO_0000157176" description="Probable S-adenosylmethionine-dependent methyltransferase MJ0882">
    <location>
        <begin position="1"/>
        <end position="197"/>
    </location>
</feature>
<feature type="binding site" evidence="2">
    <location>
        <begin position="63"/>
        <end position="67"/>
    </location>
    <ligand>
        <name>S-adenosyl-L-methionine</name>
        <dbReference type="ChEBI" id="CHEBI:59789"/>
    </ligand>
</feature>
<feature type="binding site" evidence="2">
    <location>
        <position position="84"/>
    </location>
    <ligand>
        <name>S-adenosyl-L-methionine</name>
        <dbReference type="ChEBI" id="CHEBI:59789"/>
    </ligand>
</feature>
<feature type="binding site" evidence="1">
    <location>
        <begin position="129"/>
        <end position="132"/>
    </location>
    <ligand>
        <name>substrate</name>
    </ligand>
</feature>
<feature type="binding site" evidence="2">
    <location>
        <position position="129"/>
    </location>
    <ligand>
        <name>S-adenosyl-L-methionine</name>
        <dbReference type="ChEBI" id="CHEBI:59789"/>
    </ligand>
</feature>
<feature type="strand" evidence="3">
    <location>
        <begin position="14"/>
        <end position="21"/>
    </location>
</feature>
<feature type="strand" evidence="3">
    <location>
        <begin position="24"/>
        <end position="31"/>
    </location>
</feature>
<feature type="turn" evidence="3">
    <location>
        <begin position="35"/>
        <end position="38"/>
    </location>
</feature>
<feature type="helix" evidence="3">
    <location>
        <begin position="42"/>
        <end position="50"/>
    </location>
</feature>
<feature type="strand" evidence="3">
    <location>
        <begin position="58"/>
        <end position="62"/>
    </location>
</feature>
<feature type="helix" evidence="3">
    <location>
        <begin position="68"/>
        <end position="73"/>
    </location>
</feature>
<feature type="helix" evidence="3">
    <location>
        <begin position="74"/>
        <end position="76"/>
    </location>
</feature>
<feature type="strand" evidence="3">
    <location>
        <begin position="77"/>
        <end position="85"/>
    </location>
</feature>
<feature type="helix" evidence="3">
    <location>
        <begin position="87"/>
        <end position="99"/>
    </location>
</feature>
<feature type="strand" evidence="3">
    <location>
        <begin position="107"/>
        <end position="111"/>
    </location>
</feature>
<feature type="turn" evidence="3">
    <location>
        <begin position="114"/>
        <end position="117"/>
    </location>
</feature>
<feature type="strand" evidence="3">
    <location>
        <begin position="123"/>
        <end position="128"/>
    </location>
</feature>
<feature type="helix" evidence="3">
    <location>
        <begin position="136"/>
        <end position="149"/>
    </location>
</feature>
<feature type="strand" evidence="3">
    <location>
        <begin position="150"/>
        <end position="162"/>
    </location>
</feature>
<feature type="helix" evidence="3">
    <location>
        <begin position="164"/>
        <end position="177"/>
    </location>
</feature>
<feature type="strand" evidence="3">
    <location>
        <begin position="181"/>
        <end position="186"/>
    </location>
</feature>
<feature type="strand" evidence="3">
    <location>
        <begin position="189"/>
        <end position="195"/>
    </location>
</feature>
<dbReference type="EC" id="2.1.1.-"/>
<dbReference type="EMBL" id="L77117">
    <property type="protein sequence ID" value="AAB98886.1"/>
    <property type="molecule type" value="Genomic_DNA"/>
</dbReference>
<dbReference type="PIR" id="B64410">
    <property type="entry name" value="B64410"/>
</dbReference>
<dbReference type="RefSeq" id="WP_010870396.1">
    <property type="nucleotide sequence ID" value="NC_000909.1"/>
</dbReference>
<dbReference type="PDB" id="1DUS">
    <property type="method" value="X-ray"/>
    <property type="resolution" value="1.80 A"/>
    <property type="chains" value="A=4-197"/>
</dbReference>
<dbReference type="PDBsum" id="1DUS"/>
<dbReference type="SMR" id="Q58292"/>
<dbReference type="FunCoup" id="Q58292">
    <property type="interactions" value="5"/>
</dbReference>
<dbReference type="STRING" id="243232.MJ_0882"/>
<dbReference type="PaxDb" id="243232-MJ_0882"/>
<dbReference type="EnsemblBacteria" id="AAB98886">
    <property type="protein sequence ID" value="AAB98886"/>
    <property type="gene ID" value="MJ_0882"/>
</dbReference>
<dbReference type="GeneID" id="1451771"/>
<dbReference type="KEGG" id="mja:MJ_0882"/>
<dbReference type="eggNOG" id="arCOG00110">
    <property type="taxonomic scope" value="Archaea"/>
</dbReference>
<dbReference type="HOGENOM" id="CLU_018398_7_2_2"/>
<dbReference type="InParanoid" id="Q58292"/>
<dbReference type="OrthoDB" id="4668at2157"/>
<dbReference type="PhylomeDB" id="Q58292"/>
<dbReference type="EvolutionaryTrace" id="Q58292"/>
<dbReference type="Proteomes" id="UP000000805">
    <property type="component" value="Chromosome"/>
</dbReference>
<dbReference type="GO" id="GO:0008990">
    <property type="term" value="F:rRNA (guanine-N2-)-methyltransferase activity"/>
    <property type="evidence" value="ECO:0000318"/>
    <property type="project" value="GO_Central"/>
</dbReference>
<dbReference type="GO" id="GO:0070475">
    <property type="term" value="P:rRNA base methylation"/>
    <property type="evidence" value="ECO:0000318"/>
    <property type="project" value="GO_Central"/>
</dbReference>
<dbReference type="CDD" id="cd02440">
    <property type="entry name" value="AdoMet_MTases"/>
    <property type="match status" value="1"/>
</dbReference>
<dbReference type="Gene3D" id="3.40.50.150">
    <property type="entry name" value="Vaccinia Virus protein VP39"/>
    <property type="match status" value="1"/>
</dbReference>
<dbReference type="InterPro" id="IPR046977">
    <property type="entry name" value="RsmC/RlmG"/>
</dbReference>
<dbReference type="InterPro" id="IPR029063">
    <property type="entry name" value="SAM-dependent_MTases_sf"/>
</dbReference>
<dbReference type="InterPro" id="IPR007848">
    <property type="entry name" value="Small_mtfrase_dom"/>
</dbReference>
<dbReference type="PANTHER" id="PTHR47816">
    <property type="entry name" value="RIBOSOMAL RNA SMALL SUBUNIT METHYLTRANSFERASE C"/>
    <property type="match status" value="1"/>
</dbReference>
<dbReference type="PANTHER" id="PTHR47816:SF4">
    <property type="entry name" value="RIBOSOMAL RNA SMALL SUBUNIT METHYLTRANSFERASE C"/>
    <property type="match status" value="1"/>
</dbReference>
<dbReference type="Pfam" id="PF05175">
    <property type="entry name" value="MTS"/>
    <property type="match status" value="1"/>
</dbReference>
<dbReference type="SUPFAM" id="SSF53335">
    <property type="entry name" value="S-adenosyl-L-methionine-dependent methyltransferases"/>
    <property type="match status" value="1"/>
</dbReference>
<evidence type="ECO:0000250" key="1"/>
<evidence type="ECO:0000305" key="2"/>
<evidence type="ECO:0007829" key="3">
    <source>
        <dbReference type="PDB" id="1DUS"/>
    </source>
</evidence>
<protein>
    <recommendedName>
        <fullName>Probable S-adenosylmethionine-dependent methyltransferase MJ0882</fullName>
        <ecNumber>2.1.1.-</ecNumber>
    </recommendedName>
</protein>
<organism>
    <name type="scientific">Methanocaldococcus jannaschii (strain ATCC 43067 / DSM 2661 / JAL-1 / JCM 10045 / NBRC 100440)</name>
    <name type="common">Methanococcus jannaschii</name>
    <dbReference type="NCBI Taxonomy" id="243232"/>
    <lineage>
        <taxon>Archaea</taxon>
        <taxon>Methanobacteriati</taxon>
        <taxon>Methanobacteriota</taxon>
        <taxon>Methanomada group</taxon>
        <taxon>Methanococci</taxon>
        <taxon>Methanococcales</taxon>
        <taxon>Methanocaldococcaceae</taxon>
        <taxon>Methanocaldococcus</taxon>
    </lineage>
</organism>
<keyword id="KW-0002">3D-structure</keyword>
<keyword id="KW-0489">Methyltransferase</keyword>
<keyword id="KW-1185">Reference proteome</keyword>
<keyword id="KW-0949">S-adenosyl-L-methionine</keyword>
<keyword id="KW-0808">Transferase</keyword>
<gene>
    <name type="ordered locus">MJ0882</name>
</gene>
<proteinExistence type="evidence at protein level"/>
<name>Y882_METJA</name>
<accession>Q58292</accession>
<reference key="1">
    <citation type="journal article" date="1996" name="Science">
        <title>Complete genome sequence of the methanogenic archaeon, Methanococcus jannaschii.</title>
        <authorList>
            <person name="Bult C.J."/>
            <person name="White O."/>
            <person name="Olsen G.J."/>
            <person name="Zhou L."/>
            <person name="Fleischmann R.D."/>
            <person name="Sutton G.G."/>
            <person name="Blake J.A."/>
            <person name="FitzGerald L.M."/>
            <person name="Clayton R.A."/>
            <person name="Gocayne J.D."/>
            <person name="Kerlavage A.R."/>
            <person name="Dougherty B.A."/>
            <person name="Tomb J.-F."/>
            <person name="Adams M.D."/>
            <person name="Reich C.I."/>
            <person name="Overbeek R."/>
            <person name="Kirkness E.F."/>
            <person name="Weinstock K.G."/>
            <person name="Merrick J.M."/>
            <person name="Glodek A."/>
            <person name="Scott J.L."/>
            <person name="Geoghagen N.S.M."/>
            <person name="Weidman J.F."/>
            <person name="Fuhrmann J.L."/>
            <person name="Nguyen D."/>
            <person name="Utterback T.R."/>
            <person name="Kelley J.M."/>
            <person name="Peterson J.D."/>
            <person name="Sadow P.W."/>
            <person name="Hanna M.C."/>
            <person name="Cotton M.D."/>
            <person name="Roberts K.M."/>
            <person name="Hurst M.A."/>
            <person name="Kaine B.P."/>
            <person name="Borodovsky M."/>
            <person name="Klenk H.-P."/>
            <person name="Fraser C.M."/>
            <person name="Smith H.O."/>
            <person name="Woese C.R."/>
            <person name="Venter J.C."/>
        </authorList>
    </citation>
    <scope>NUCLEOTIDE SEQUENCE [LARGE SCALE GENOMIC DNA]</scope>
    <source>
        <strain>ATCC 43067 / DSM 2661 / JAL-1 / JCM 10045 / NBRC 100440</strain>
    </source>
</reference>
<reference key="2">
    <citation type="journal article" date="2002" name="J. Struct. Funct. Genomics">
        <title>Structure-based experimental confirmation of biochemical function to a methyltransferase, MJ0882, from hyperthermophile Methanococcus jannaschii.</title>
        <authorList>
            <person name="Huang L."/>
            <person name="Hung L."/>
            <person name="Odell M."/>
            <person name="Yokota H."/>
            <person name="Kim R."/>
            <person name="Kim S.H."/>
        </authorList>
    </citation>
    <scope>X-RAY CRYSTALLOGRAPHY (1.8 ANGSTROMS) OF 4-197</scope>
    <scope>S-ADENOSYLMETHIONINE BINDING</scope>
</reference>
<sequence length="197" mass="22244">MHYFSEKPTTKSDVKIVEDILRGKKLKFKTDSGVFSYGKVDKGTKILVENVVVDKDDDILDLGCGYGVIGIALADEVKSTTMADINRRAIKLAKENIKLNNLDNYDIRVVHSDLYENVKDRKYNKIITNPPIRAGKEVLHRIIEEGKELLKDNGEIWVVIQTKQGAKSLAKYMKDVFGNVETVTIKGGYRVLKSKKL</sequence>
<comment type="function">
    <text>Probable methyltransferase that uses S-adenosylmethionine as the methyl donor. Binds neither NAD nor NADP in vitro.</text>
</comment>
<comment type="similarity">
    <text evidence="2">Belongs to the methyltransferase superfamily.</text>
</comment>